<organism>
    <name type="scientific">Kluyveromyces lactis (strain ATCC 8585 / CBS 2359 / DSM 70799 / NBRC 1267 / NRRL Y-1140 / WM37)</name>
    <name type="common">Yeast</name>
    <name type="synonym">Candida sphaerica</name>
    <dbReference type="NCBI Taxonomy" id="284590"/>
    <lineage>
        <taxon>Eukaryota</taxon>
        <taxon>Fungi</taxon>
        <taxon>Dikarya</taxon>
        <taxon>Ascomycota</taxon>
        <taxon>Saccharomycotina</taxon>
        <taxon>Saccharomycetes</taxon>
        <taxon>Saccharomycetales</taxon>
        <taxon>Saccharomycetaceae</taxon>
        <taxon>Kluyveromyces</taxon>
    </lineage>
</organism>
<dbReference type="EMBL" id="CR382122">
    <property type="protein sequence ID" value="CAH01963.1"/>
    <property type="molecule type" value="Genomic_DNA"/>
</dbReference>
<dbReference type="RefSeq" id="XP_451570.1">
    <property type="nucleotide sequence ID" value="XM_451570.1"/>
</dbReference>
<dbReference type="SMR" id="Q6CWW9"/>
<dbReference type="FunCoup" id="Q6CWW9">
    <property type="interactions" value="1485"/>
</dbReference>
<dbReference type="STRING" id="284590.Q6CWW9"/>
<dbReference type="PaxDb" id="284590-Q6CWW9"/>
<dbReference type="KEGG" id="kla:KLLA0_B00891g"/>
<dbReference type="eggNOG" id="KOG1999">
    <property type="taxonomic scope" value="Eukaryota"/>
</dbReference>
<dbReference type="HOGENOM" id="CLU_003537_1_0_1"/>
<dbReference type="InParanoid" id="Q6CWW9"/>
<dbReference type="OMA" id="YPVGYMN"/>
<dbReference type="Proteomes" id="UP000000598">
    <property type="component" value="Chromosome B"/>
</dbReference>
<dbReference type="GO" id="GO:0032044">
    <property type="term" value="C:DSIF complex"/>
    <property type="evidence" value="ECO:0007669"/>
    <property type="project" value="TreeGrafter"/>
</dbReference>
<dbReference type="GO" id="GO:0005840">
    <property type="term" value="C:ribosome"/>
    <property type="evidence" value="ECO:0007669"/>
    <property type="project" value="InterPro"/>
</dbReference>
<dbReference type="GO" id="GO:0003729">
    <property type="term" value="F:mRNA binding"/>
    <property type="evidence" value="ECO:0007669"/>
    <property type="project" value="TreeGrafter"/>
</dbReference>
<dbReference type="GO" id="GO:0003735">
    <property type="term" value="F:structural constituent of ribosome"/>
    <property type="evidence" value="ECO:0007669"/>
    <property type="project" value="InterPro"/>
</dbReference>
<dbReference type="GO" id="GO:0006397">
    <property type="term" value="P:mRNA processing"/>
    <property type="evidence" value="ECO:0007669"/>
    <property type="project" value="UniProtKB-KW"/>
</dbReference>
<dbReference type="GO" id="GO:0032784">
    <property type="term" value="P:regulation of DNA-templated transcription elongation"/>
    <property type="evidence" value="ECO:0007669"/>
    <property type="project" value="InterPro"/>
</dbReference>
<dbReference type="GO" id="GO:0006357">
    <property type="term" value="P:regulation of transcription by RNA polymerase II"/>
    <property type="evidence" value="ECO:0007669"/>
    <property type="project" value="InterPro"/>
</dbReference>
<dbReference type="GO" id="GO:0140673">
    <property type="term" value="P:transcription elongation-coupled chromatin remodeling"/>
    <property type="evidence" value="ECO:0007669"/>
    <property type="project" value="InterPro"/>
</dbReference>
<dbReference type="GO" id="GO:0006412">
    <property type="term" value="P:translation"/>
    <property type="evidence" value="ECO:0007669"/>
    <property type="project" value="InterPro"/>
</dbReference>
<dbReference type="CDD" id="cd06081">
    <property type="entry name" value="KOW_Spt5_1"/>
    <property type="match status" value="1"/>
</dbReference>
<dbReference type="CDD" id="cd06082">
    <property type="entry name" value="KOW_Spt5_2"/>
    <property type="match status" value="1"/>
</dbReference>
<dbReference type="CDD" id="cd06083">
    <property type="entry name" value="KOW_Spt5_3"/>
    <property type="match status" value="1"/>
</dbReference>
<dbReference type="CDD" id="cd06084">
    <property type="entry name" value="KOW_Spt5_4"/>
    <property type="match status" value="1"/>
</dbReference>
<dbReference type="CDD" id="cd06085">
    <property type="entry name" value="KOW_Spt5_5"/>
    <property type="match status" value="1"/>
</dbReference>
<dbReference type="CDD" id="cd09888">
    <property type="entry name" value="NGN_Euk"/>
    <property type="match status" value="1"/>
</dbReference>
<dbReference type="FunFam" id="2.30.30.30:FF:000058">
    <property type="entry name" value="Transcription elongation factor SPT5"/>
    <property type="match status" value="1"/>
</dbReference>
<dbReference type="FunFam" id="2.30.30.30:FF:000063">
    <property type="entry name" value="Transcription elongation factor SPT5"/>
    <property type="match status" value="1"/>
</dbReference>
<dbReference type="FunFam" id="3.30.70.940:FF:000005">
    <property type="entry name" value="Transcription elongation factor SPT5"/>
    <property type="match status" value="1"/>
</dbReference>
<dbReference type="Gene3D" id="2.30.30.30">
    <property type="match status" value="3"/>
</dbReference>
<dbReference type="Gene3D" id="3.30.70.940">
    <property type="entry name" value="NusG, N-terminal domain"/>
    <property type="match status" value="1"/>
</dbReference>
<dbReference type="InterPro" id="IPR005824">
    <property type="entry name" value="KOW"/>
</dbReference>
<dbReference type="InterPro" id="IPR041973">
    <property type="entry name" value="KOW_Spt5_1"/>
</dbReference>
<dbReference type="InterPro" id="IPR041975">
    <property type="entry name" value="KOW_Spt5_2"/>
</dbReference>
<dbReference type="InterPro" id="IPR041976">
    <property type="entry name" value="KOW_Spt5_3"/>
</dbReference>
<dbReference type="InterPro" id="IPR041977">
    <property type="entry name" value="KOW_Spt5_4"/>
</dbReference>
<dbReference type="InterPro" id="IPR041978">
    <property type="entry name" value="KOW_Spt5_5"/>
</dbReference>
<dbReference type="InterPro" id="IPR005100">
    <property type="entry name" value="NGN-domain"/>
</dbReference>
<dbReference type="InterPro" id="IPR006645">
    <property type="entry name" value="NGN-like_dom"/>
</dbReference>
<dbReference type="InterPro" id="IPR036735">
    <property type="entry name" value="NGN_dom_sf"/>
</dbReference>
<dbReference type="InterPro" id="IPR039385">
    <property type="entry name" value="NGN_Euk"/>
</dbReference>
<dbReference type="InterPro" id="IPR014722">
    <property type="entry name" value="Rib_uL2_dom2"/>
</dbReference>
<dbReference type="InterPro" id="IPR005825">
    <property type="entry name" value="Ribosomal_uL24_CS"/>
</dbReference>
<dbReference type="InterPro" id="IPR039659">
    <property type="entry name" value="SPT5"/>
</dbReference>
<dbReference type="InterPro" id="IPR024945">
    <property type="entry name" value="Spt5_C_dom"/>
</dbReference>
<dbReference type="InterPro" id="IPR022581">
    <property type="entry name" value="Spt5_N"/>
</dbReference>
<dbReference type="InterPro" id="IPR017071">
    <property type="entry name" value="TF_Spt5_eukaryote"/>
</dbReference>
<dbReference type="InterPro" id="IPR008991">
    <property type="entry name" value="Translation_prot_SH3-like_sf"/>
</dbReference>
<dbReference type="PANTHER" id="PTHR11125">
    <property type="entry name" value="SUPPRESSOR OF TY 5"/>
    <property type="match status" value="1"/>
</dbReference>
<dbReference type="PANTHER" id="PTHR11125:SF7">
    <property type="entry name" value="TRANSCRIPTION ELONGATION FACTOR SPT5"/>
    <property type="match status" value="1"/>
</dbReference>
<dbReference type="Pfam" id="PF12815">
    <property type="entry name" value="CTD"/>
    <property type="match status" value="1"/>
</dbReference>
<dbReference type="Pfam" id="PF23042">
    <property type="entry name" value="KOW1_SPT5"/>
    <property type="match status" value="1"/>
</dbReference>
<dbReference type="Pfam" id="PF23284">
    <property type="entry name" value="KOW2_Spt5"/>
    <property type="match status" value="1"/>
</dbReference>
<dbReference type="Pfam" id="PF23291">
    <property type="entry name" value="KOW4_SPT5"/>
    <property type="match status" value="1"/>
</dbReference>
<dbReference type="Pfam" id="PF23290">
    <property type="entry name" value="KOW5_SPT5"/>
    <property type="match status" value="1"/>
</dbReference>
<dbReference type="Pfam" id="PF23037">
    <property type="entry name" value="KOWx_SPT5"/>
    <property type="match status" value="1"/>
</dbReference>
<dbReference type="Pfam" id="PF03439">
    <property type="entry name" value="Spt5-NGN"/>
    <property type="match status" value="1"/>
</dbReference>
<dbReference type="Pfam" id="PF11942">
    <property type="entry name" value="Spt5_N"/>
    <property type="match status" value="1"/>
</dbReference>
<dbReference type="PIRSF" id="PIRSF036945">
    <property type="entry name" value="Spt5"/>
    <property type="match status" value="1"/>
</dbReference>
<dbReference type="SMART" id="SM01104">
    <property type="entry name" value="CTD"/>
    <property type="match status" value="1"/>
</dbReference>
<dbReference type="SMART" id="SM00739">
    <property type="entry name" value="KOW"/>
    <property type="match status" value="5"/>
</dbReference>
<dbReference type="SMART" id="SM00738">
    <property type="entry name" value="NGN"/>
    <property type="match status" value="1"/>
</dbReference>
<dbReference type="SUPFAM" id="SSF50104">
    <property type="entry name" value="Translation proteins SH3-like domain"/>
    <property type="match status" value="1"/>
</dbReference>
<comment type="function">
    <text evidence="1">The SPT4-SPT5 complex mediates both activation and inhibition of transcription elongation, and plays a role in pre-mRNA processing. This complex seems to be important for the stability of the RNA polymerase II elongation machinery on the chromatin template but not for the inherent ability of this machinery to translocate down the gene (By similarity).</text>
</comment>
<comment type="subunit">
    <text evidence="1">Component of the SPT4-SPT5 complex. Interacts with RNA polymerase II (By similarity).</text>
</comment>
<comment type="subcellular location">
    <subcellularLocation>
        <location evidence="1">Nucleus</location>
    </subcellularLocation>
</comment>
<comment type="similarity">
    <text evidence="3">Belongs to the SPT5 family.</text>
</comment>
<gene>
    <name type="primary">SPT5</name>
    <name type="ordered locus">KLLA0B00891g</name>
</gene>
<sequence>MSGTAEESDKAEAVSVPETVSGSVESQDKEHNSTSSSSDSTDVVGGKKRTIDEVDGSSENNSASVDQLKDAPTDSKPKTEATEDSPIRGNQGNNQENSQENKDDEDDEDDNDDDDNDDDDDEDEDVESYRKKQRRERNRFLDIEAEVSEDEDDEEDEEDSELVREGFITRGDEEDEEDRGGRVDDRLHRELDQNLQKTADEDMHKIAEDFKKRYGRDSSKDYRVQTQGGYVPQRFMLPSVDTAIIWSVRCRPGKEKELVRKLLNKKFNLDKSMGSKKLKILSIFQRDNYTGRIYIEAPKQSVIEKFVNGVPDVYSNQKLLIPVQELPLLLKPTKSDEVRLDVGSYVRIKRGIYKNDLAVIDQISQNNLEALLKIVPRLDYGKNDEIDPDTNQRKAKRATFASRPPPQLFNPTMALRLDQANLFKRDDRHFTYRKEDYVDGYLFKSFKIQYLDTKNIQPTVEELSRFGSKEGDVDLAAIAQTMKKAQASKAMFQPGDRVEVLTGEQRGSRGVVTRSSKDVISVKLSGFSDKSLEFPIASLRKIFELGDHVTVIAGEHEGNAGLVLLVQNGQVTFVSDQTRENLTISANNLSKSMDSTPTSSEYALHDIVELSAKNVACVIQAGHDIFKIIDDSGKVATVTKGSILAKINVARAKVAAVDGNGREIKIGDVVREKIGSRREGQVLYVQNQHIFIRSKTITENAGVFVVNPMNVEAVASKENLMSSALDLSKINPNIASKMGPPQTTQQTRLVGRDVALNKTVRIRSAGYKGQLGIVKDVNGDKATIELHSKNKHITIDKRKLTYFSHEGGEGITYDELVSRRGRTPHTRLGPSYVSAPRHMAAGGAVATNTPQQLPGGMTPGWNAFDGGKTPAVGQNGGTSSWGGASTWGGQGPGGASAWGGAAGNTSTWGGQGATSTWGGASTWGNKSSYGGASSWAASGESGAASAWGGGNKSSYGGTSTWGGNQGGVSAWGGSGNKSQRSKNTGGSSTWGNNQSQHNSGERSAWGNASQHNNSGNRSAWGNQDARGGGSTWGGNN</sequence>
<proteinExistence type="inferred from homology"/>
<feature type="chain" id="PRO_0000238563" description="Transcription elongation factor SPT5">
    <location>
        <begin position="1"/>
        <end position="1036"/>
    </location>
</feature>
<feature type="region of interest" description="Disordered" evidence="2">
    <location>
        <begin position="1"/>
        <end position="189"/>
    </location>
</feature>
<feature type="region of interest" description="Disordered" evidence="2">
    <location>
        <begin position="383"/>
        <end position="403"/>
    </location>
</feature>
<feature type="region of interest" description="Disordered" evidence="2">
    <location>
        <begin position="892"/>
        <end position="919"/>
    </location>
</feature>
<feature type="region of interest" description="Disordered" evidence="2">
    <location>
        <begin position="966"/>
        <end position="1036"/>
    </location>
</feature>
<feature type="compositionally biased region" description="Low complexity" evidence="2">
    <location>
        <begin position="33"/>
        <end position="44"/>
    </location>
</feature>
<feature type="compositionally biased region" description="Basic and acidic residues" evidence="2">
    <location>
        <begin position="67"/>
        <end position="81"/>
    </location>
</feature>
<feature type="compositionally biased region" description="Low complexity" evidence="2">
    <location>
        <begin position="89"/>
        <end position="98"/>
    </location>
</feature>
<feature type="compositionally biased region" description="Acidic residues" evidence="2">
    <location>
        <begin position="102"/>
        <end position="126"/>
    </location>
</feature>
<feature type="compositionally biased region" description="Acidic residues" evidence="2">
    <location>
        <begin position="143"/>
        <end position="160"/>
    </location>
</feature>
<feature type="compositionally biased region" description="Basic and acidic residues" evidence="2">
    <location>
        <begin position="179"/>
        <end position="189"/>
    </location>
</feature>
<feature type="compositionally biased region" description="Gly residues" evidence="2">
    <location>
        <begin position="892"/>
        <end position="902"/>
    </location>
</feature>
<feature type="compositionally biased region" description="Gly residues" evidence="2">
    <location>
        <begin position="966"/>
        <end position="975"/>
    </location>
</feature>
<feature type="compositionally biased region" description="Polar residues" evidence="2">
    <location>
        <begin position="976"/>
        <end position="998"/>
    </location>
</feature>
<feature type="compositionally biased region" description="Polar residues" evidence="2">
    <location>
        <begin position="1006"/>
        <end position="1021"/>
    </location>
</feature>
<feature type="compositionally biased region" description="Gly residues" evidence="2">
    <location>
        <begin position="1026"/>
        <end position="1036"/>
    </location>
</feature>
<reference key="1">
    <citation type="journal article" date="2004" name="Nature">
        <title>Genome evolution in yeasts.</title>
        <authorList>
            <person name="Dujon B."/>
            <person name="Sherman D."/>
            <person name="Fischer G."/>
            <person name="Durrens P."/>
            <person name="Casaregola S."/>
            <person name="Lafontaine I."/>
            <person name="de Montigny J."/>
            <person name="Marck C."/>
            <person name="Neuveglise C."/>
            <person name="Talla E."/>
            <person name="Goffard N."/>
            <person name="Frangeul L."/>
            <person name="Aigle M."/>
            <person name="Anthouard V."/>
            <person name="Babour A."/>
            <person name="Barbe V."/>
            <person name="Barnay S."/>
            <person name="Blanchin S."/>
            <person name="Beckerich J.-M."/>
            <person name="Beyne E."/>
            <person name="Bleykasten C."/>
            <person name="Boisrame A."/>
            <person name="Boyer J."/>
            <person name="Cattolico L."/>
            <person name="Confanioleri F."/>
            <person name="de Daruvar A."/>
            <person name="Despons L."/>
            <person name="Fabre E."/>
            <person name="Fairhead C."/>
            <person name="Ferry-Dumazet H."/>
            <person name="Groppi A."/>
            <person name="Hantraye F."/>
            <person name="Hennequin C."/>
            <person name="Jauniaux N."/>
            <person name="Joyet P."/>
            <person name="Kachouri R."/>
            <person name="Kerrest A."/>
            <person name="Koszul R."/>
            <person name="Lemaire M."/>
            <person name="Lesur I."/>
            <person name="Ma L."/>
            <person name="Muller H."/>
            <person name="Nicaud J.-M."/>
            <person name="Nikolski M."/>
            <person name="Oztas S."/>
            <person name="Ozier-Kalogeropoulos O."/>
            <person name="Pellenz S."/>
            <person name="Potier S."/>
            <person name="Richard G.-F."/>
            <person name="Straub M.-L."/>
            <person name="Suleau A."/>
            <person name="Swennen D."/>
            <person name="Tekaia F."/>
            <person name="Wesolowski-Louvel M."/>
            <person name="Westhof E."/>
            <person name="Wirth B."/>
            <person name="Zeniou-Meyer M."/>
            <person name="Zivanovic Y."/>
            <person name="Bolotin-Fukuhara M."/>
            <person name="Thierry A."/>
            <person name="Bouchier C."/>
            <person name="Caudron B."/>
            <person name="Scarpelli C."/>
            <person name="Gaillardin C."/>
            <person name="Weissenbach J."/>
            <person name="Wincker P."/>
            <person name="Souciet J.-L."/>
        </authorList>
    </citation>
    <scope>NUCLEOTIDE SEQUENCE [LARGE SCALE GENOMIC DNA]</scope>
    <source>
        <strain>ATCC 8585 / CBS 2359 / DSM 70799 / NBRC 1267 / NRRL Y-1140 / WM37</strain>
    </source>
</reference>
<accession>Q6CWW9</accession>
<protein>
    <recommendedName>
        <fullName>Transcription elongation factor SPT5</fullName>
    </recommendedName>
    <alternativeName>
        <fullName>Chromatin elongation factor SPT5</fullName>
    </alternativeName>
</protein>
<evidence type="ECO:0000250" key="1"/>
<evidence type="ECO:0000256" key="2">
    <source>
        <dbReference type="SAM" id="MobiDB-lite"/>
    </source>
</evidence>
<evidence type="ECO:0000305" key="3"/>
<keyword id="KW-0507">mRNA processing</keyword>
<keyword id="KW-0539">Nucleus</keyword>
<keyword id="KW-1185">Reference proteome</keyword>
<keyword id="KW-0804">Transcription</keyword>
<name>SPT5_KLULA</name>